<accession>P38463</accession>
<reference key="1">
    <citation type="journal article" date="1992" name="J. Mol. Biol.">
        <title>Gene organization deduced from the complete sequence of liverwort Marchantia polymorpha mitochondrial DNA. A primitive form of plant mitochondrial genome.</title>
        <authorList>
            <person name="Oda K."/>
            <person name="Yamato K."/>
            <person name="Ohta E."/>
            <person name="Nakamura Y."/>
            <person name="Takemura M."/>
            <person name="Nozato N."/>
            <person name="Akashi K."/>
            <person name="Kanegae T."/>
            <person name="Ogura Y."/>
            <person name="Kohchi T."/>
            <person name="Ohyama K."/>
        </authorList>
    </citation>
    <scope>NUCLEOTIDE SEQUENCE [GENOMIC DNA]</scope>
</reference>
<protein>
    <recommendedName>
        <fullName>Uncharacterized mitochondrial protein ymf20</fullName>
    </recommendedName>
    <alternativeName>
        <fullName>ORF167</fullName>
    </alternativeName>
</protein>
<comment type="subcellular location">
    <subcellularLocation>
        <location evidence="1">Mitochondrion</location>
    </subcellularLocation>
</comment>
<dbReference type="EMBL" id="M68929">
    <property type="protein sequence ID" value="AAC09413.1"/>
    <property type="molecule type" value="Genomic_DNA"/>
</dbReference>
<dbReference type="PIR" id="S25974">
    <property type="entry name" value="S25974"/>
</dbReference>
<dbReference type="GO" id="GO:0005739">
    <property type="term" value="C:mitochondrion"/>
    <property type="evidence" value="ECO:0007669"/>
    <property type="project" value="UniProtKB-SubCell"/>
</dbReference>
<dbReference type="Gene3D" id="3.40.50.300">
    <property type="entry name" value="P-loop containing nucleotide triphosphate hydrolases"/>
    <property type="match status" value="1"/>
</dbReference>
<dbReference type="InterPro" id="IPR027417">
    <property type="entry name" value="P-loop_NTPase"/>
</dbReference>
<geneLocation type="mitochondrion"/>
<feature type="chain" id="PRO_0000196848" description="Uncharacterized mitochondrial protein ymf20">
    <location>
        <begin position="1"/>
        <end position="167"/>
    </location>
</feature>
<keyword id="KW-0496">Mitochondrion</keyword>
<organism>
    <name type="scientific">Marchantia polymorpha</name>
    <name type="common">Common liverwort</name>
    <name type="synonym">Marchantia aquatica</name>
    <dbReference type="NCBI Taxonomy" id="3197"/>
    <lineage>
        <taxon>Eukaryota</taxon>
        <taxon>Viridiplantae</taxon>
        <taxon>Streptophyta</taxon>
        <taxon>Embryophyta</taxon>
        <taxon>Marchantiophyta</taxon>
        <taxon>Marchantiopsida</taxon>
        <taxon>Marchantiidae</taxon>
        <taxon>Marchantiales</taxon>
        <taxon>Marchantiaceae</taxon>
        <taxon>Marchantia</taxon>
    </lineage>
</organism>
<gene>
    <name type="primary">YMF20</name>
</gene>
<proteinExistence type="predicted"/>
<name>YMF20_MARPO</name>
<evidence type="ECO:0000305" key="1"/>
<sequence>MLIVVNDSPFYKGDTAILRQLVGGDRISCKLKHANVRHEFSYSGWVLIVGNEYLGMSETSGALARRMIVFPARNAVHLKKFLIKEEHGLFMGPLAEEISEIAKWALSMPDQDATEIMRDPEIHCPSLSEENKLCRENLNHISACLMKTPCSSSKPSQGICHAHDPIS</sequence>